<feature type="chain" id="PRO_0000317329" description="Methylthioribose-1-phosphate isomerase">
    <location>
        <begin position="1"/>
        <end position="354"/>
    </location>
</feature>
<feature type="active site" description="Proton donor" evidence="1">
    <location>
        <position position="246"/>
    </location>
</feature>
<feature type="site" description="Transition state stabilizer" evidence="1">
    <location>
        <position position="166"/>
    </location>
</feature>
<feature type="sequence conflict" description="In Ref. 1; CAJ83906." evidence="2" ref="1">
    <original>L</original>
    <variation>R</variation>
    <location>
        <position position="63"/>
    </location>
</feature>
<protein>
    <recommendedName>
        <fullName evidence="1">Methylthioribose-1-phosphate isomerase</fullName>
        <shortName evidence="1">M1Pi</shortName>
        <shortName evidence="1">MTR-1-P isomerase</shortName>
        <ecNumber evidence="1">5.3.1.23</ecNumber>
    </recommendedName>
    <alternativeName>
        <fullName evidence="1">S-methyl-5-thioribose-1-phosphate isomerase</fullName>
    </alternativeName>
    <alternativeName>
        <fullName evidence="1">Translation initiation factor eIF-2B subunit alpha/beta/delta-like protein</fullName>
    </alternativeName>
</protein>
<reference key="1">
    <citation type="submission" date="2006-10" db="EMBL/GenBank/DDBJ databases">
        <authorList>
            <consortium name="Sanger Xenopus tropicalis EST/cDNA project"/>
        </authorList>
    </citation>
    <scope>NUCLEOTIDE SEQUENCE [LARGE SCALE MRNA]</scope>
    <source>
        <tissue>Gastrula</tissue>
    </source>
</reference>
<reference key="2">
    <citation type="submission" date="2006-07" db="EMBL/GenBank/DDBJ databases">
        <authorList>
            <consortium name="NIH - Xenopus Gene Collection (XGC) project"/>
        </authorList>
    </citation>
    <scope>NUCLEOTIDE SEQUENCE [LARGE SCALE MRNA]</scope>
    <source>
        <tissue>Testis</tissue>
    </source>
</reference>
<sequence>MSLESVRYSRGSLQVLNQLLLPHKSEYEPVTGVQQGADAIRTMKVRGAPAIAIVGVLSLAVELTSRTCQDVPSFIAFVQESLCHLVDARPTAVNMKKAADELNAFLAKEAEKAGATTQGLAESVIQWAEALLKKDVEDNQMIGDFGAKHILETAGPTEKVCMLTHCNTGSLATAGYGTALGVVRSLHVLGRLSHVFCTETRPYNQGSRLTAYELVYEKIPATLITDSMASAAIRDRKVTAVVVGADRVVANGDTANKIGTYQLAITARYHGIPFYVAAPSTSCDLSLPTGGSIVIEERPSHELTDINGVRIAAPGIGVWNPAFDVTPHELITGIITERGVFKPEELRDGLTKGQ</sequence>
<name>MTNA_XENTR</name>
<accession>Q0VFN1</accession>
<accession>Q28DT8</accession>
<comment type="function">
    <text evidence="1">Catalyzes the interconversion of methylthioribose-1-phosphate (MTR-1-P) into methylthioribulose-1-phosphate (MTRu-1-P).</text>
</comment>
<comment type="catalytic activity">
    <reaction evidence="1">
        <text>5-(methylsulfanyl)-alpha-D-ribose 1-phosphate = 5-(methylsulfanyl)-D-ribulose 1-phosphate</text>
        <dbReference type="Rhea" id="RHEA:19989"/>
        <dbReference type="ChEBI" id="CHEBI:58533"/>
        <dbReference type="ChEBI" id="CHEBI:58548"/>
        <dbReference type="EC" id="5.3.1.23"/>
    </reaction>
</comment>
<comment type="pathway">
    <text evidence="1">Amino-acid biosynthesis; L-methionine biosynthesis via salvage pathway; L-methionine from S-methyl-5-thio-alpha-D-ribose 1-phosphate: step 1/6.</text>
</comment>
<comment type="subcellular location">
    <subcellularLocation>
        <location evidence="1">Cytoplasm</location>
    </subcellularLocation>
    <subcellularLocation>
        <location evidence="1">Nucleus</location>
    </subcellularLocation>
</comment>
<comment type="similarity">
    <text evidence="1">Belongs to the eIF-2B alpha/beta/delta subunits family. MtnA subfamily.</text>
</comment>
<proteinExistence type="evidence at transcript level"/>
<dbReference type="EC" id="5.3.1.23" evidence="1"/>
<dbReference type="EMBL" id="CR848601">
    <property type="protein sequence ID" value="CAJ83906.1"/>
    <property type="molecule type" value="mRNA"/>
</dbReference>
<dbReference type="EMBL" id="BC118767">
    <property type="protein sequence ID" value="AAI18768.1"/>
    <property type="molecule type" value="mRNA"/>
</dbReference>
<dbReference type="RefSeq" id="NP_001016877.1">
    <property type="nucleotide sequence ID" value="NM_001016877.2"/>
</dbReference>
<dbReference type="SMR" id="Q0VFN1"/>
<dbReference type="FunCoup" id="Q0VFN1">
    <property type="interactions" value="1899"/>
</dbReference>
<dbReference type="STRING" id="8364.ENSXETP00000021859"/>
<dbReference type="PaxDb" id="8364-ENSXETP00000047323"/>
<dbReference type="DNASU" id="549631"/>
<dbReference type="GeneID" id="549631"/>
<dbReference type="KEGG" id="xtr:549631"/>
<dbReference type="AGR" id="Xenbase:XB-GENE-974909"/>
<dbReference type="CTD" id="84245"/>
<dbReference type="Xenbase" id="XB-GENE-974909">
    <property type="gene designation" value="mri1"/>
</dbReference>
<dbReference type="eggNOG" id="KOG1468">
    <property type="taxonomic scope" value="Eukaryota"/>
</dbReference>
<dbReference type="InParanoid" id="Q0VFN1"/>
<dbReference type="OrthoDB" id="2461at2759"/>
<dbReference type="Reactome" id="R-XTR-1237112">
    <property type="pathway name" value="Methionine salvage pathway"/>
</dbReference>
<dbReference type="UniPathway" id="UPA00904">
    <property type="reaction ID" value="UER00874"/>
</dbReference>
<dbReference type="Proteomes" id="UP000008143">
    <property type="component" value="Chromosome 3"/>
</dbReference>
<dbReference type="Bgee" id="ENSXETG00000021867">
    <property type="expression patterns" value="Expressed in gastrula and 13 other cell types or tissues"/>
</dbReference>
<dbReference type="ExpressionAtlas" id="Q0VFN1">
    <property type="expression patterns" value="baseline"/>
</dbReference>
<dbReference type="GO" id="GO:0005737">
    <property type="term" value="C:cytoplasm"/>
    <property type="evidence" value="ECO:0007669"/>
    <property type="project" value="UniProtKB-SubCell"/>
</dbReference>
<dbReference type="GO" id="GO:0005634">
    <property type="term" value="C:nucleus"/>
    <property type="evidence" value="ECO:0007669"/>
    <property type="project" value="UniProtKB-SubCell"/>
</dbReference>
<dbReference type="GO" id="GO:0046523">
    <property type="term" value="F:S-methyl-5-thioribose-1-phosphate isomerase activity"/>
    <property type="evidence" value="ECO:0007669"/>
    <property type="project" value="UniProtKB-UniRule"/>
</dbReference>
<dbReference type="GO" id="GO:0019509">
    <property type="term" value="P:L-methionine salvage from methylthioadenosine"/>
    <property type="evidence" value="ECO:0007669"/>
    <property type="project" value="UniProtKB-UniRule"/>
</dbReference>
<dbReference type="FunFam" id="1.20.120.420:FF:000003">
    <property type="entry name" value="Methylthioribose-1-phosphate isomerase"/>
    <property type="match status" value="1"/>
</dbReference>
<dbReference type="FunFam" id="3.40.50.10470:FF:000003">
    <property type="entry name" value="Methylthioribose-1-phosphate isomerase"/>
    <property type="match status" value="1"/>
</dbReference>
<dbReference type="Gene3D" id="1.20.120.420">
    <property type="entry name" value="translation initiation factor eif-2b, domain 1"/>
    <property type="match status" value="1"/>
</dbReference>
<dbReference type="Gene3D" id="3.40.50.10470">
    <property type="entry name" value="Translation initiation factor eif-2b, domain 2"/>
    <property type="match status" value="1"/>
</dbReference>
<dbReference type="HAMAP" id="MF_01678">
    <property type="entry name" value="Salvage_MtnA"/>
    <property type="match status" value="1"/>
</dbReference>
<dbReference type="InterPro" id="IPR000649">
    <property type="entry name" value="IF-2B-related"/>
</dbReference>
<dbReference type="InterPro" id="IPR005251">
    <property type="entry name" value="IF-M1Pi"/>
</dbReference>
<dbReference type="InterPro" id="IPR042529">
    <property type="entry name" value="IF_2B-like_C"/>
</dbReference>
<dbReference type="InterPro" id="IPR011559">
    <property type="entry name" value="Initiation_fac_2B_a/b/d"/>
</dbReference>
<dbReference type="InterPro" id="IPR027363">
    <property type="entry name" value="M1Pi_N"/>
</dbReference>
<dbReference type="InterPro" id="IPR037171">
    <property type="entry name" value="NagB/RpiA_transferase-like"/>
</dbReference>
<dbReference type="NCBIfam" id="TIGR00524">
    <property type="entry name" value="eIF-2B_rel"/>
    <property type="match status" value="1"/>
</dbReference>
<dbReference type="NCBIfam" id="NF004326">
    <property type="entry name" value="PRK05720.1"/>
    <property type="match status" value="1"/>
</dbReference>
<dbReference type="NCBIfam" id="TIGR00512">
    <property type="entry name" value="salvage_mtnA"/>
    <property type="match status" value="1"/>
</dbReference>
<dbReference type="PANTHER" id="PTHR43475">
    <property type="entry name" value="METHYLTHIORIBOSE-1-PHOSPHATE ISOMERASE"/>
    <property type="match status" value="1"/>
</dbReference>
<dbReference type="PANTHER" id="PTHR43475:SF1">
    <property type="entry name" value="METHYLTHIORIBOSE-1-PHOSPHATE ISOMERASE"/>
    <property type="match status" value="1"/>
</dbReference>
<dbReference type="Pfam" id="PF01008">
    <property type="entry name" value="IF-2B"/>
    <property type="match status" value="1"/>
</dbReference>
<dbReference type="SUPFAM" id="SSF100950">
    <property type="entry name" value="NagB/RpiA/CoA transferase-like"/>
    <property type="match status" value="1"/>
</dbReference>
<organism>
    <name type="scientific">Xenopus tropicalis</name>
    <name type="common">Western clawed frog</name>
    <name type="synonym">Silurana tropicalis</name>
    <dbReference type="NCBI Taxonomy" id="8364"/>
    <lineage>
        <taxon>Eukaryota</taxon>
        <taxon>Metazoa</taxon>
        <taxon>Chordata</taxon>
        <taxon>Craniata</taxon>
        <taxon>Vertebrata</taxon>
        <taxon>Euteleostomi</taxon>
        <taxon>Amphibia</taxon>
        <taxon>Batrachia</taxon>
        <taxon>Anura</taxon>
        <taxon>Pipoidea</taxon>
        <taxon>Pipidae</taxon>
        <taxon>Xenopodinae</taxon>
        <taxon>Xenopus</taxon>
        <taxon>Silurana</taxon>
    </lineage>
</organism>
<evidence type="ECO:0000255" key="1">
    <source>
        <dbReference type="HAMAP-Rule" id="MF_03119"/>
    </source>
</evidence>
<evidence type="ECO:0000305" key="2"/>
<keyword id="KW-0028">Amino-acid biosynthesis</keyword>
<keyword id="KW-0963">Cytoplasm</keyword>
<keyword id="KW-0413">Isomerase</keyword>
<keyword id="KW-0486">Methionine biosynthesis</keyword>
<keyword id="KW-0539">Nucleus</keyword>
<keyword id="KW-1185">Reference proteome</keyword>
<gene>
    <name type="primary">mri1</name>
    <name type="ORF">TGas129a07.1</name>
</gene>